<proteinExistence type="inferred from homology"/>
<reference key="1">
    <citation type="journal article" date="2010" name="J. Bacteriol.">
        <title>Whole genome sequences of two Xylella fastidiosa strains (M12 and M23) causing almond leaf scorch disease in California.</title>
        <authorList>
            <person name="Chen J."/>
            <person name="Xie G."/>
            <person name="Han S."/>
            <person name="Chertkov O."/>
            <person name="Sims D."/>
            <person name="Civerolo E.L."/>
        </authorList>
    </citation>
    <scope>NUCLEOTIDE SEQUENCE [LARGE SCALE GENOMIC DNA]</scope>
    <source>
        <strain>M23</strain>
    </source>
</reference>
<keyword id="KW-0963">Cytoplasm</keyword>
<keyword id="KW-0255">Endonuclease</keyword>
<keyword id="KW-0378">Hydrolase</keyword>
<keyword id="KW-0460">Magnesium</keyword>
<keyword id="KW-0479">Metal-binding</keyword>
<keyword id="KW-0507">mRNA processing</keyword>
<keyword id="KW-0540">Nuclease</keyword>
<keyword id="KW-0694">RNA-binding</keyword>
<keyword id="KW-0698">rRNA processing</keyword>
<keyword id="KW-0699">rRNA-binding</keyword>
<keyword id="KW-0819">tRNA processing</keyword>
<accession>B2I604</accession>
<evidence type="ECO:0000255" key="1">
    <source>
        <dbReference type="HAMAP-Rule" id="MF_00104"/>
    </source>
</evidence>
<evidence type="ECO:0000256" key="2">
    <source>
        <dbReference type="SAM" id="MobiDB-lite"/>
    </source>
</evidence>
<organism>
    <name type="scientific">Xylella fastidiosa (strain M23)</name>
    <dbReference type="NCBI Taxonomy" id="405441"/>
    <lineage>
        <taxon>Bacteria</taxon>
        <taxon>Pseudomonadati</taxon>
        <taxon>Pseudomonadota</taxon>
        <taxon>Gammaproteobacteria</taxon>
        <taxon>Lysobacterales</taxon>
        <taxon>Lysobacteraceae</taxon>
        <taxon>Xylella</taxon>
    </lineage>
</organism>
<feature type="chain" id="PRO_1000094142" description="Ribonuclease 3">
    <location>
        <begin position="1"/>
        <end position="227"/>
    </location>
</feature>
<feature type="domain" description="RNase III" evidence="1">
    <location>
        <begin position="6"/>
        <end position="128"/>
    </location>
</feature>
<feature type="domain" description="DRBM" evidence="1">
    <location>
        <begin position="155"/>
        <end position="225"/>
    </location>
</feature>
<feature type="region of interest" description="Disordered" evidence="2">
    <location>
        <begin position="203"/>
        <end position="227"/>
    </location>
</feature>
<feature type="compositionally biased region" description="Basic and acidic residues" evidence="2">
    <location>
        <begin position="203"/>
        <end position="212"/>
    </location>
</feature>
<feature type="active site" evidence="1">
    <location>
        <position position="45"/>
    </location>
</feature>
<feature type="active site" evidence="1">
    <location>
        <position position="117"/>
    </location>
</feature>
<feature type="binding site" evidence="1">
    <location>
        <position position="41"/>
    </location>
    <ligand>
        <name>Mg(2+)</name>
        <dbReference type="ChEBI" id="CHEBI:18420"/>
    </ligand>
</feature>
<feature type="binding site" evidence="1">
    <location>
        <position position="114"/>
    </location>
    <ligand>
        <name>Mg(2+)</name>
        <dbReference type="ChEBI" id="CHEBI:18420"/>
    </ligand>
</feature>
<feature type="binding site" evidence="1">
    <location>
        <position position="117"/>
    </location>
    <ligand>
        <name>Mg(2+)</name>
        <dbReference type="ChEBI" id="CHEBI:18420"/>
    </ligand>
</feature>
<name>RNC_XYLF2</name>
<comment type="function">
    <text evidence="1">Digests double-stranded RNA. Involved in the processing of primary rRNA transcript to yield the immediate precursors to the large and small rRNAs (23S and 16S). Processes some mRNAs, and tRNAs when they are encoded in the rRNA operon. Processes pre-crRNA and tracrRNA of type II CRISPR loci if present in the organism.</text>
</comment>
<comment type="catalytic activity">
    <reaction evidence="1">
        <text>Endonucleolytic cleavage to 5'-phosphomonoester.</text>
        <dbReference type="EC" id="3.1.26.3"/>
    </reaction>
</comment>
<comment type="cofactor">
    <cofactor evidence="1">
        <name>Mg(2+)</name>
        <dbReference type="ChEBI" id="CHEBI:18420"/>
    </cofactor>
</comment>
<comment type="subunit">
    <text evidence="1">Homodimer.</text>
</comment>
<comment type="subcellular location">
    <subcellularLocation>
        <location evidence="1">Cytoplasm</location>
    </subcellularLocation>
</comment>
<comment type="similarity">
    <text evidence="1">Belongs to the ribonuclease III family.</text>
</comment>
<gene>
    <name evidence="1" type="primary">rnc</name>
    <name type="ordered locus">XfasM23_1375</name>
</gene>
<protein>
    <recommendedName>
        <fullName evidence="1">Ribonuclease 3</fullName>
        <ecNumber evidence="1">3.1.26.3</ecNumber>
    </recommendedName>
    <alternativeName>
        <fullName evidence="1">Ribonuclease III</fullName>
        <shortName evidence="1">RNase III</shortName>
    </alternativeName>
</protein>
<dbReference type="EC" id="3.1.26.3" evidence="1"/>
<dbReference type="EMBL" id="CP001011">
    <property type="protein sequence ID" value="ACB92793.1"/>
    <property type="molecule type" value="Genomic_DNA"/>
</dbReference>
<dbReference type="RefSeq" id="WP_004088291.1">
    <property type="nucleotide sequence ID" value="NC_010577.1"/>
</dbReference>
<dbReference type="SMR" id="B2I604"/>
<dbReference type="GeneID" id="93905104"/>
<dbReference type="KEGG" id="xfn:XfasM23_1375"/>
<dbReference type="HOGENOM" id="CLU_000907_1_1_6"/>
<dbReference type="Proteomes" id="UP000001698">
    <property type="component" value="Chromosome"/>
</dbReference>
<dbReference type="GO" id="GO:0005737">
    <property type="term" value="C:cytoplasm"/>
    <property type="evidence" value="ECO:0007669"/>
    <property type="project" value="UniProtKB-SubCell"/>
</dbReference>
<dbReference type="GO" id="GO:0003725">
    <property type="term" value="F:double-stranded RNA binding"/>
    <property type="evidence" value="ECO:0007669"/>
    <property type="project" value="TreeGrafter"/>
</dbReference>
<dbReference type="GO" id="GO:0046872">
    <property type="term" value="F:metal ion binding"/>
    <property type="evidence" value="ECO:0007669"/>
    <property type="project" value="UniProtKB-KW"/>
</dbReference>
<dbReference type="GO" id="GO:0004525">
    <property type="term" value="F:ribonuclease III activity"/>
    <property type="evidence" value="ECO:0007669"/>
    <property type="project" value="UniProtKB-UniRule"/>
</dbReference>
<dbReference type="GO" id="GO:0019843">
    <property type="term" value="F:rRNA binding"/>
    <property type="evidence" value="ECO:0007669"/>
    <property type="project" value="UniProtKB-KW"/>
</dbReference>
<dbReference type="GO" id="GO:0006397">
    <property type="term" value="P:mRNA processing"/>
    <property type="evidence" value="ECO:0007669"/>
    <property type="project" value="UniProtKB-UniRule"/>
</dbReference>
<dbReference type="GO" id="GO:0010468">
    <property type="term" value="P:regulation of gene expression"/>
    <property type="evidence" value="ECO:0007669"/>
    <property type="project" value="TreeGrafter"/>
</dbReference>
<dbReference type="GO" id="GO:0006364">
    <property type="term" value="P:rRNA processing"/>
    <property type="evidence" value="ECO:0007669"/>
    <property type="project" value="UniProtKB-UniRule"/>
</dbReference>
<dbReference type="GO" id="GO:0008033">
    <property type="term" value="P:tRNA processing"/>
    <property type="evidence" value="ECO:0007669"/>
    <property type="project" value="UniProtKB-KW"/>
</dbReference>
<dbReference type="CDD" id="cd10845">
    <property type="entry name" value="DSRM_RNAse_III_family"/>
    <property type="match status" value="1"/>
</dbReference>
<dbReference type="CDD" id="cd00593">
    <property type="entry name" value="RIBOc"/>
    <property type="match status" value="1"/>
</dbReference>
<dbReference type="FunFam" id="1.10.1520.10:FF:000001">
    <property type="entry name" value="Ribonuclease 3"/>
    <property type="match status" value="1"/>
</dbReference>
<dbReference type="FunFam" id="3.30.160.20:FF:000003">
    <property type="entry name" value="Ribonuclease 3"/>
    <property type="match status" value="1"/>
</dbReference>
<dbReference type="Gene3D" id="3.30.160.20">
    <property type="match status" value="1"/>
</dbReference>
<dbReference type="Gene3D" id="1.10.1520.10">
    <property type="entry name" value="Ribonuclease III domain"/>
    <property type="match status" value="1"/>
</dbReference>
<dbReference type="HAMAP" id="MF_00104">
    <property type="entry name" value="RNase_III"/>
    <property type="match status" value="1"/>
</dbReference>
<dbReference type="InterPro" id="IPR014720">
    <property type="entry name" value="dsRBD_dom"/>
</dbReference>
<dbReference type="InterPro" id="IPR011907">
    <property type="entry name" value="RNase_III"/>
</dbReference>
<dbReference type="InterPro" id="IPR000999">
    <property type="entry name" value="RNase_III_dom"/>
</dbReference>
<dbReference type="InterPro" id="IPR036389">
    <property type="entry name" value="RNase_III_sf"/>
</dbReference>
<dbReference type="NCBIfam" id="TIGR02191">
    <property type="entry name" value="RNaseIII"/>
    <property type="match status" value="1"/>
</dbReference>
<dbReference type="PANTHER" id="PTHR11207:SF0">
    <property type="entry name" value="RIBONUCLEASE 3"/>
    <property type="match status" value="1"/>
</dbReference>
<dbReference type="PANTHER" id="PTHR11207">
    <property type="entry name" value="RIBONUCLEASE III"/>
    <property type="match status" value="1"/>
</dbReference>
<dbReference type="Pfam" id="PF00035">
    <property type="entry name" value="dsrm"/>
    <property type="match status" value="1"/>
</dbReference>
<dbReference type="Pfam" id="PF14622">
    <property type="entry name" value="Ribonucleas_3_3"/>
    <property type="match status" value="1"/>
</dbReference>
<dbReference type="SMART" id="SM00358">
    <property type="entry name" value="DSRM"/>
    <property type="match status" value="1"/>
</dbReference>
<dbReference type="SMART" id="SM00535">
    <property type="entry name" value="RIBOc"/>
    <property type="match status" value="1"/>
</dbReference>
<dbReference type="SUPFAM" id="SSF54768">
    <property type="entry name" value="dsRNA-binding domain-like"/>
    <property type="match status" value="1"/>
</dbReference>
<dbReference type="SUPFAM" id="SSF69065">
    <property type="entry name" value="RNase III domain-like"/>
    <property type="match status" value="1"/>
</dbReference>
<dbReference type="PROSITE" id="PS50137">
    <property type="entry name" value="DS_RBD"/>
    <property type="match status" value="1"/>
</dbReference>
<dbReference type="PROSITE" id="PS00517">
    <property type="entry name" value="RNASE_3_1"/>
    <property type="match status" value="1"/>
</dbReference>
<dbReference type="PROSITE" id="PS50142">
    <property type="entry name" value="RNASE_3_2"/>
    <property type="match status" value="1"/>
</dbReference>
<sequence>MISSKASDYQQRIGYVFTDPSLLLQALRHRSAGTPHNERLEFLGDSVVNLLIAEALFQRWPRADEGALTRARSELVRETSLASIARTMQLGEQLILGPGELKSGGHRRDSILADAVEAVIAAIYLDADLATCRTVVLPWFETALTALPVGKPEKDPKTRLQEWLQARQWSLPVYELIFESGDPHTKHFRVSCTLGELKLRTEGEGSSRRLAEQDAASHAIDQLDSNK</sequence>